<proteinExistence type="evidence at protein level"/>
<accession>O06718</accession>
<dbReference type="EMBL" id="Y09476">
    <property type="protein sequence ID" value="CAA70676.1"/>
    <property type="molecule type" value="Genomic_DNA"/>
</dbReference>
<dbReference type="EMBL" id="AL009126">
    <property type="protein sequence ID" value="CAB12909.1"/>
    <property type="molecule type" value="Genomic_DNA"/>
</dbReference>
<dbReference type="PIR" id="E69836">
    <property type="entry name" value="E69836"/>
</dbReference>
<dbReference type="RefSeq" id="NP_388950.1">
    <property type="nucleotide sequence ID" value="NC_000964.3"/>
</dbReference>
<dbReference type="RefSeq" id="WP_003233093.1">
    <property type="nucleotide sequence ID" value="NZ_OZ025638.1"/>
</dbReference>
<dbReference type="FunCoup" id="O06718">
    <property type="interactions" value="48"/>
</dbReference>
<dbReference type="STRING" id="224308.BSU10690"/>
<dbReference type="PaxDb" id="224308-BSU10690"/>
<dbReference type="EnsemblBacteria" id="CAB12909">
    <property type="protein sequence ID" value="CAB12909"/>
    <property type="gene ID" value="BSU_10690"/>
</dbReference>
<dbReference type="GeneID" id="936349"/>
<dbReference type="KEGG" id="bsu:BSU10690"/>
<dbReference type="PATRIC" id="fig|224308.179.peg.1149"/>
<dbReference type="eggNOG" id="ENOG5033C5U">
    <property type="taxonomic scope" value="Bacteria"/>
</dbReference>
<dbReference type="InParanoid" id="O06718"/>
<dbReference type="OrthoDB" id="2455313at2"/>
<dbReference type="BioCyc" id="BSUB:BSU10690-MONOMER"/>
<dbReference type="Proteomes" id="UP000001570">
    <property type="component" value="Chromosome"/>
</dbReference>
<dbReference type="GO" id="GO:0030435">
    <property type="term" value="P:sporulation resulting in formation of a cellular spore"/>
    <property type="evidence" value="ECO:0007669"/>
    <property type="project" value="UniProtKB-KW"/>
</dbReference>
<dbReference type="InterPro" id="IPR017257">
    <property type="entry name" value="Spore_germination_GerPD_prd"/>
</dbReference>
<dbReference type="PIRSF" id="PIRSF037666">
    <property type="entry name" value="GerPD_prd"/>
    <property type="match status" value="1"/>
</dbReference>
<protein>
    <recommendedName>
        <fullName>Probable spore germination protein GerPD</fullName>
    </recommendedName>
</protein>
<name>GERPD_BACSU</name>
<keyword id="KW-0309">Germination</keyword>
<keyword id="KW-1185">Reference proteome</keyword>
<keyword id="KW-0749">Sporulation</keyword>
<comment type="function">
    <text>Required for the formation of functionally normal spores. Could be involved in the establishment of normal spore coat structure and/or permeability, which allows the access of germinants to their receptor.</text>
</comment>
<comment type="developmental stage">
    <text>Expressed during sporulation, around the time of spore coat synthesis and assembly, in mother cell compartment.</text>
</comment>
<comment type="induction">
    <text>Expression is sigma K-dependent and negatively regulated by GerE.</text>
</comment>
<feature type="chain" id="PRO_0000087473" description="Probable spore germination protein GerPD">
    <location>
        <begin position="1"/>
        <end position="58"/>
    </location>
</feature>
<reference key="1">
    <citation type="journal article" date="1997" name="Microbiology">
        <title>Sequencing of regions downstream of addA (98 degrees) and citG (289 degrees) in Bacillus subtilis.</title>
        <authorList>
            <person name="Medina N."/>
            <person name="Vannier F."/>
            <person name="Roche B."/>
            <person name="Autret S."/>
            <person name="Levine A."/>
            <person name="Seror S.J."/>
        </authorList>
    </citation>
    <scope>NUCLEOTIDE SEQUENCE [GENOMIC DNA]</scope>
    <source>
        <strain>168</strain>
    </source>
</reference>
<reference key="2">
    <citation type="journal article" date="1997" name="Nature">
        <title>The complete genome sequence of the Gram-positive bacterium Bacillus subtilis.</title>
        <authorList>
            <person name="Kunst F."/>
            <person name="Ogasawara N."/>
            <person name="Moszer I."/>
            <person name="Albertini A.M."/>
            <person name="Alloni G."/>
            <person name="Azevedo V."/>
            <person name="Bertero M.G."/>
            <person name="Bessieres P."/>
            <person name="Bolotin A."/>
            <person name="Borchert S."/>
            <person name="Borriss R."/>
            <person name="Boursier L."/>
            <person name="Brans A."/>
            <person name="Braun M."/>
            <person name="Brignell S.C."/>
            <person name="Bron S."/>
            <person name="Brouillet S."/>
            <person name="Bruschi C.V."/>
            <person name="Caldwell B."/>
            <person name="Capuano V."/>
            <person name="Carter N.M."/>
            <person name="Choi S.-K."/>
            <person name="Codani J.-J."/>
            <person name="Connerton I.F."/>
            <person name="Cummings N.J."/>
            <person name="Daniel R.A."/>
            <person name="Denizot F."/>
            <person name="Devine K.M."/>
            <person name="Duesterhoeft A."/>
            <person name="Ehrlich S.D."/>
            <person name="Emmerson P.T."/>
            <person name="Entian K.-D."/>
            <person name="Errington J."/>
            <person name="Fabret C."/>
            <person name="Ferrari E."/>
            <person name="Foulger D."/>
            <person name="Fritz C."/>
            <person name="Fujita M."/>
            <person name="Fujita Y."/>
            <person name="Fuma S."/>
            <person name="Galizzi A."/>
            <person name="Galleron N."/>
            <person name="Ghim S.-Y."/>
            <person name="Glaser P."/>
            <person name="Goffeau A."/>
            <person name="Golightly E.J."/>
            <person name="Grandi G."/>
            <person name="Guiseppi G."/>
            <person name="Guy B.J."/>
            <person name="Haga K."/>
            <person name="Haiech J."/>
            <person name="Harwood C.R."/>
            <person name="Henaut A."/>
            <person name="Hilbert H."/>
            <person name="Holsappel S."/>
            <person name="Hosono S."/>
            <person name="Hullo M.-F."/>
            <person name="Itaya M."/>
            <person name="Jones L.-M."/>
            <person name="Joris B."/>
            <person name="Karamata D."/>
            <person name="Kasahara Y."/>
            <person name="Klaerr-Blanchard M."/>
            <person name="Klein C."/>
            <person name="Kobayashi Y."/>
            <person name="Koetter P."/>
            <person name="Koningstein G."/>
            <person name="Krogh S."/>
            <person name="Kumano M."/>
            <person name="Kurita K."/>
            <person name="Lapidus A."/>
            <person name="Lardinois S."/>
            <person name="Lauber J."/>
            <person name="Lazarevic V."/>
            <person name="Lee S.-M."/>
            <person name="Levine A."/>
            <person name="Liu H."/>
            <person name="Masuda S."/>
            <person name="Mauel C."/>
            <person name="Medigue C."/>
            <person name="Medina N."/>
            <person name="Mellado R.P."/>
            <person name="Mizuno M."/>
            <person name="Moestl D."/>
            <person name="Nakai S."/>
            <person name="Noback M."/>
            <person name="Noone D."/>
            <person name="O'Reilly M."/>
            <person name="Ogawa K."/>
            <person name="Ogiwara A."/>
            <person name="Oudega B."/>
            <person name="Park S.-H."/>
            <person name="Parro V."/>
            <person name="Pohl T.M."/>
            <person name="Portetelle D."/>
            <person name="Porwollik S."/>
            <person name="Prescott A.M."/>
            <person name="Presecan E."/>
            <person name="Pujic P."/>
            <person name="Purnelle B."/>
            <person name="Rapoport G."/>
            <person name="Rey M."/>
            <person name="Reynolds S."/>
            <person name="Rieger M."/>
            <person name="Rivolta C."/>
            <person name="Rocha E."/>
            <person name="Roche B."/>
            <person name="Rose M."/>
            <person name="Sadaie Y."/>
            <person name="Sato T."/>
            <person name="Scanlan E."/>
            <person name="Schleich S."/>
            <person name="Schroeter R."/>
            <person name="Scoffone F."/>
            <person name="Sekiguchi J."/>
            <person name="Sekowska A."/>
            <person name="Seror S.J."/>
            <person name="Serror P."/>
            <person name="Shin B.-S."/>
            <person name="Soldo B."/>
            <person name="Sorokin A."/>
            <person name="Tacconi E."/>
            <person name="Takagi T."/>
            <person name="Takahashi H."/>
            <person name="Takemaru K."/>
            <person name="Takeuchi M."/>
            <person name="Tamakoshi A."/>
            <person name="Tanaka T."/>
            <person name="Terpstra P."/>
            <person name="Tognoni A."/>
            <person name="Tosato V."/>
            <person name="Uchiyama S."/>
            <person name="Vandenbol M."/>
            <person name="Vannier F."/>
            <person name="Vassarotti A."/>
            <person name="Viari A."/>
            <person name="Wambutt R."/>
            <person name="Wedler E."/>
            <person name="Wedler H."/>
            <person name="Weitzenegger T."/>
            <person name="Winters P."/>
            <person name="Wipat A."/>
            <person name="Yamamoto H."/>
            <person name="Yamane K."/>
            <person name="Yasumoto K."/>
            <person name="Yata K."/>
            <person name="Yoshida K."/>
            <person name="Yoshikawa H.-F."/>
            <person name="Zumstein E."/>
            <person name="Yoshikawa H."/>
            <person name="Danchin A."/>
        </authorList>
    </citation>
    <scope>NUCLEOTIDE SEQUENCE [LARGE SCALE GENOMIC DNA]</scope>
    <source>
        <strain>168</strain>
    </source>
</reference>
<reference key="3">
    <citation type="journal article" date="2000" name="J. Bacteriol.">
        <title>Mutations in the gerP locus of Bacillus subtilis and Bacillus cereus affect access of germinants to their targets in spores.</title>
        <authorList>
            <person name="Behravan J."/>
            <person name="Chirakkal H."/>
            <person name="Masson A."/>
            <person name="Moir A."/>
        </authorList>
    </citation>
    <scope>CHARACTERIZATION</scope>
    <source>
        <strain>168 / 1604</strain>
    </source>
</reference>
<organism>
    <name type="scientific">Bacillus subtilis (strain 168)</name>
    <dbReference type="NCBI Taxonomy" id="224308"/>
    <lineage>
        <taxon>Bacteria</taxon>
        <taxon>Bacillati</taxon>
        <taxon>Bacillota</taxon>
        <taxon>Bacilli</taxon>
        <taxon>Bacillales</taxon>
        <taxon>Bacillaceae</taxon>
        <taxon>Bacillus</taxon>
    </lineage>
</organism>
<gene>
    <name type="primary">gerPD</name>
    <name type="synonym">yisE</name>
    <name type="ordered locus">BSU10690</name>
</gene>
<sequence>MIFTVINRSLEVGDIRMNGVSSSSVFHIGDTESIYLSSIFDTPPESLIIGPFAPLAPE</sequence>